<name>Y229_SULTO</name>
<feature type="chain" id="PRO_0000142389" description="Protein STK_02290">
    <location>
        <begin position="1"/>
        <end position="230"/>
    </location>
</feature>
<feature type="domain" description="AMMECR1" evidence="1">
    <location>
        <begin position="15"/>
        <end position="213"/>
    </location>
</feature>
<feature type="helix" evidence="2">
    <location>
        <begin position="9"/>
        <end position="11"/>
    </location>
</feature>
<feature type="helix" evidence="2">
    <location>
        <begin position="14"/>
        <end position="31"/>
    </location>
</feature>
<feature type="helix" evidence="2">
    <location>
        <begin position="39"/>
        <end position="45"/>
    </location>
</feature>
<feature type="helix" evidence="2">
    <location>
        <begin position="49"/>
        <end position="52"/>
    </location>
</feature>
<feature type="strand" evidence="2">
    <location>
        <begin position="53"/>
        <end position="64"/>
    </location>
</feature>
<feature type="strand" evidence="2">
    <location>
        <begin position="69"/>
        <end position="83"/>
    </location>
</feature>
<feature type="helix" evidence="2">
    <location>
        <begin position="84"/>
        <end position="97"/>
    </location>
</feature>
<feature type="helix" evidence="2">
    <location>
        <begin position="107"/>
        <end position="110"/>
    </location>
</feature>
<feature type="strand" evidence="2">
    <location>
        <begin position="113"/>
        <end position="120"/>
    </location>
</feature>
<feature type="helix" evidence="2">
    <location>
        <begin position="131"/>
        <end position="137"/>
    </location>
</feature>
<feature type="turn" evidence="2">
    <location>
        <begin position="140"/>
        <end position="142"/>
    </location>
</feature>
<feature type="strand" evidence="2">
    <location>
        <begin position="144"/>
        <end position="149"/>
    </location>
</feature>
<feature type="turn" evidence="2">
    <location>
        <begin position="150"/>
        <end position="152"/>
    </location>
</feature>
<feature type="strand" evidence="2">
    <location>
        <begin position="153"/>
        <end position="157"/>
    </location>
</feature>
<feature type="helix" evidence="2">
    <location>
        <begin position="160"/>
        <end position="164"/>
    </location>
</feature>
<feature type="helix" evidence="2">
    <location>
        <begin position="169"/>
        <end position="180"/>
    </location>
</feature>
<feature type="helix" evidence="2">
    <location>
        <begin position="186"/>
        <end position="188"/>
    </location>
</feature>
<feature type="strand" evidence="2">
    <location>
        <begin position="192"/>
        <end position="197"/>
    </location>
</feature>
<feature type="strand" evidence="2">
    <location>
        <begin position="199"/>
        <end position="206"/>
    </location>
</feature>
<feature type="strand" evidence="2">
    <location>
        <begin position="212"/>
        <end position="215"/>
    </location>
</feature>
<feature type="helix" evidence="2">
    <location>
        <begin position="217"/>
        <end position="219"/>
    </location>
</feature>
<feature type="helix" evidence="2">
    <location>
        <begin position="223"/>
        <end position="225"/>
    </location>
</feature>
<gene>
    <name type="ordered locus">STK_02290</name>
</gene>
<reference key="1">
    <citation type="journal article" date="2001" name="DNA Res.">
        <title>Complete genome sequence of an aerobic thermoacidophilic Crenarchaeon, Sulfolobus tokodaii strain7.</title>
        <authorList>
            <person name="Kawarabayasi Y."/>
            <person name="Hino Y."/>
            <person name="Horikawa H."/>
            <person name="Jin-no K."/>
            <person name="Takahashi M."/>
            <person name="Sekine M."/>
            <person name="Baba S."/>
            <person name="Ankai A."/>
            <person name="Kosugi H."/>
            <person name="Hosoyama A."/>
            <person name="Fukui S."/>
            <person name="Nagai Y."/>
            <person name="Nishijima K."/>
            <person name="Otsuka R."/>
            <person name="Nakazawa H."/>
            <person name="Takamiya M."/>
            <person name="Kato Y."/>
            <person name="Yoshizawa T."/>
            <person name="Tanaka T."/>
            <person name="Kudoh Y."/>
            <person name="Yamazaki J."/>
            <person name="Kushida N."/>
            <person name="Oguchi A."/>
            <person name="Aoki K."/>
            <person name="Masuda S."/>
            <person name="Yanagii M."/>
            <person name="Nishimura M."/>
            <person name="Yamagishi A."/>
            <person name="Oshima T."/>
            <person name="Kikuchi H."/>
        </authorList>
    </citation>
    <scope>NUCLEOTIDE SEQUENCE [LARGE SCALE GENOMIC DNA]</scope>
    <source>
        <strain>DSM 16993 / JCM 10545 / NBRC 100140 / 7</strain>
    </source>
</reference>
<accession>Q976G0</accession>
<dbReference type="EMBL" id="BA000023">
    <property type="protein sequence ID" value="BAB65187.1"/>
    <property type="molecule type" value="Genomic_DNA"/>
</dbReference>
<dbReference type="RefSeq" id="WP_010978169.1">
    <property type="nucleotide sequence ID" value="NC_003106.2"/>
</dbReference>
<dbReference type="PDB" id="1WSC">
    <property type="method" value="X-ray"/>
    <property type="resolution" value="2.45 A"/>
    <property type="chains" value="A/B=1-230"/>
</dbReference>
<dbReference type="PDBsum" id="1WSC"/>
<dbReference type="SMR" id="Q976G0"/>
<dbReference type="STRING" id="273063.STK_02290"/>
<dbReference type="GeneID" id="1458117"/>
<dbReference type="KEGG" id="sto:STK_02290"/>
<dbReference type="PATRIC" id="fig|273063.9.peg.275"/>
<dbReference type="eggNOG" id="arCOG01336">
    <property type="taxonomic scope" value="Archaea"/>
</dbReference>
<dbReference type="OrthoDB" id="25187at2157"/>
<dbReference type="EvolutionaryTrace" id="Q976G0"/>
<dbReference type="Proteomes" id="UP000001015">
    <property type="component" value="Chromosome"/>
</dbReference>
<dbReference type="Gene3D" id="3.30.700.20">
    <property type="entry name" value="Hypothetical protein ph0010, domain 1"/>
    <property type="match status" value="1"/>
</dbReference>
<dbReference type="Gene3D" id="3.30.1490.150">
    <property type="entry name" value="Hypothetical protein ph0010, domain 2"/>
    <property type="match status" value="1"/>
</dbReference>
<dbReference type="HAMAP" id="MF_00645">
    <property type="entry name" value="AMMECR1"/>
    <property type="match status" value="1"/>
</dbReference>
<dbReference type="InterPro" id="IPR023473">
    <property type="entry name" value="AMMECR1"/>
</dbReference>
<dbReference type="InterPro" id="IPR036071">
    <property type="entry name" value="AMMECR1_dom_sf"/>
</dbReference>
<dbReference type="InterPro" id="IPR002733">
    <property type="entry name" value="AMMECR1_domain"/>
</dbReference>
<dbReference type="InterPro" id="IPR027485">
    <property type="entry name" value="AMMECR1_N"/>
</dbReference>
<dbReference type="InterPro" id="IPR027623">
    <property type="entry name" value="AmmeMemoSam_A"/>
</dbReference>
<dbReference type="InterPro" id="IPR023472">
    <property type="entry name" value="Uncharacterised_MJ0810"/>
</dbReference>
<dbReference type="NCBIfam" id="TIGR04335">
    <property type="entry name" value="AmmeMemoSam_A"/>
    <property type="match status" value="1"/>
</dbReference>
<dbReference type="NCBIfam" id="TIGR00296">
    <property type="entry name" value="TIGR00296 family protein"/>
    <property type="match status" value="1"/>
</dbReference>
<dbReference type="PANTHER" id="PTHR13016:SF0">
    <property type="entry name" value="AMME SYNDROME CANDIDATE GENE 1 PROTEIN"/>
    <property type="match status" value="1"/>
</dbReference>
<dbReference type="PANTHER" id="PTHR13016">
    <property type="entry name" value="AMMECR1 HOMOLOG"/>
    <property type="match status" value="1"/>
</dbReference>
<dbReference type="Pfam" id="PF01871">
    <property type="entry name" value="AMMECR1"/>
    <property type="match status" value="1"/>
</dbReference>
<dbReference type="SUPFAM" id="SSF143447">
    <property type="entry name" value="AMMECR1-like"/>
    <property type="match status" value="1"/>
</dbReference>
<dbReference type="PROSITE" id="PS51112">
    <property type="entry name" value="AMMECR1"/>
    <property type="match status" value="1"/>
</dbReference>
<protein>
    <recommendedName>
        <fullName evidence="1">Protein STK_02290</fullName>
    </recommendedName>
</protein>
<keyword id="KW-0002">3D-structure</keyword>
<keyword id="KW-1185">Reference proteome</keyword>
<evidence type="ECO:0000255" key="1">
    <source>
        <dbReference type="HAMAP-Rule" id="MF_00645"/>
    </source>
</evidence>
<evidence type="ECO:0007829" key="2">
    <source>
        <dbReference type="PDB" id="1WSC"/>
    </source>
</evidence>
<sequence length="230" mass="25828">MSQEQLVAVNELNENLGKVLIKIARDSIANKLGILKINLEDYLSSLNDPILNKKGLAFVTLETYYGNSTSLRGCIGYVEAVAPLKEIVSKAAIAAAFSDPRFPPLSKGEFDNIIIEVTVLTKPQEIDVENRWELPKKIKVGEDGLIVEYGILYSGLLLPQVPMEYCWDEETFLAETCIKAGLEPDCWLNNKVKIKKFQGIIFREEKPKSEKILIIKPSEVKCKKEEISLL</sequence>
<proteinExistence type="evidence at protein level"/>
<organism>
    <name type="scientific">Sulfurisphaera tokodaii (strain DSM 16993 / JCM 10545 / NBRC 100140 / 7)</name>
    <name type="common">Sulfolobus tokodaii</name>
    <dbReference type="NCBI Taxonomy" id="273063"/>
    <lineage>
        <taxon>Archaea</taxon>
        <taxon>Thermoproteota</taxon>
        <taxon>Thermoprotei</taxon>
        <taxon>Sulfolobales</taxon>
        <taxon>Sulfolobaceae</taxon>
        <taxon>Sulfurisphaera</taxon>
    </lineage>
</organism>